<accession>P57941</accession>
<name>RPOA_PASMU</name>
<reference key="1">
    <citation type="journal article" date="2001" name="Proc. Natl. Acad. Sci. U.S.A.">
        <title>Complete genomic sequence of Pasteurella multocida Pm70.</title>
        <authorList>
            <person name="May B.J."/>
            <person name="Zhang Q."/>
            <person name="Li L.L."/>
            <person name="Paustian M.L."/>
            <person name="Whittam T.S."/>
            <person name="Kapur V."/>
        </authorList>
    </citation>
    <scope>NUCLEOTIDE SEQUENCE [LARGE SCALE GENOMIC DNA]</scope>
    <source>
        <strain>Pm70</strain>
    </source>
</reference>
<keyword id="KW-0240">DNA-directed RNA polymerase</keyword>
<keyword id="KW-0548">Nucleotidyltransferase</keyword>
<keyword id="KW-1185">Reference proteome</keyword>
<keyword id="KW-0804">Transcription</keyword>
<keyword id="KW-0808">Transferase</keyword>
<dbReference type="EC" id="2.7.7.6" evidence="1"/>
<dbReference type="EMBL" id="AE004439">
    <property type="protein sequence ID" value="AAK03474.1"/>
    <property type="molecule type" value="Genomic_DNA"/>
</dbReference>
<dbReference type="RefSeq" id="WP_005717909.1">
    <property type="nucleotide sequence ID" value="NC_002663.1"/>
</dbReference>
<dbReference type="SMR" id="P57941"/>
<dbReference type="STRING" id="272843.PM1390"/>
<dbReference type="EnsemblBacteria" id="AAK03474">
    <property type="protein sequence ID" value="AAK03474"/>
    <property type="gene ID" value="PM1390"/>
</dbReference>
<dbReference type="KEGG" id="pmu:PM1390"/>
<dbReference type="HOGENOM" id="CLU_053084_0_0_6"/>
<dbReference type="OrthoDB" id="9805706at2"/>
<dbReference type="Proteomes" id="UP000000809">
    <property type="component" value="Chromosome"/>
</dbReference>
<dbReference type="GO" id="GO:0005737">
    <property type="term" value="C:cytoplasm"/>
    <property type="evidence" value="ECO:0007669"/>
    <property type="project" value="UniProtKB-ARBA"/>
</dbReference>
<dbReference type="GO" id="GO:0000428">
    <property type="term" value="C:DNA-directed RNA polymerase complex"/>
    <property type="evidence" value="ECO:0007669"/>
    <property type="project" value="UniProtKB-KW"/>
</dbReference>
<dbReference type="GO" id="GO:0003677">
    <property type="term" value="F:DNA binding"/>
    <property type="evidence" value="ECO:0007669"/>
    <property type="project" value="UniProtKB-UniRule"/>
</dbReference>
<dbReference type="GO" id="GO:0003899">
    <property type="term" value="F:DNA-directed RNA polymerase activity"/>
    <property type="evidence" value="ECO:0007669"/>
    <property type="project" value="UniProtKB-UniRule"/>
</dbReference>
<dbReference type="GO" id="GO:0046983">
    <property type="term" value="F:protein dimerization activity"/>
    <property type="evidence" value="ECO:0007669"/>
    <property type="project" value="InterPro"/>
</dbReference>
<dbReference type="GO" id="GO:0006351">
    <property type="term" value="P:DNA-templated transcription"/>
    <property type="evidence" value="ECO:0007669"/>
    <property type="project" value="UniProtKB-UniRule"/>
</dbReference>
<dbReference type="CDD" id="cd06928">
    <property type="entry name" value="RNAP_alpha_NTD"/>
    <property type="match status" value="1"/>
</dbReference>
<dbReference type="FunFam" id="1.10.150.20:FF:000001">
    <property type="entry name" value="DNA-directed RNA polymerase subunit alpha"/>
    <property type="match status" value="1"/>
</dbReference>
<dbReference type="FunFam" id="2.170.120.12:FF:000001">
    <property type="entry name" value="DNA-directed RNA polymerase subunit alpha"/>
    <property type="match status" value="1"/>
</dbReference>
<dbReference type="Gene3D" id="1.10.150.20">
    <property type="entry name" value="5' to 3' exonuclease, C-terminal subdomain"/>
    <property type="match status" value="1"/>
</dbReference>
<dbReference type="Gene3D" id="2.170.120.12">
    <property type="entry name" value="DNA-directed RNA polymerase, insert domain"/>
    <property type="match status" value="1"/>
</dbReference>
<dbReference type="Gene3D" id="3.30.1360.10">
    <property type="entry name" value="RNA polymerase, RBP11-like subunit"/>
    <property type="match status" value="1"/>
</dbReference>
<dbReference type="HAMAP" id="MF_00059">
    <property type="entry name" value="RNApol_bact_RpoA"/>
    <property type="match status" value="1"/>
</dbReference>
<dbReference type="InterPro" id="IPR011262">
    <property type="entry name" value="DNA-dir_RNA_pol_insert"/>
</dbReference>
<dbReference type="InterPro" id="IPR011263">
    <property type="entry name" value="DNA-dir_RNA_pol_RpoA/D/Rpb3"/>
</dbReference>
<dbReference type="InterPro" id="IPR011773">
    <property type="entry name" value="DNA-dir_RpoA"/>
</dbReference>
<dbReference type="InterPro" id="IPR036603">
    <property type="entry name" value="RBP11-like"/>
</dbReference>
<dbReference type="InterPro" id="IPR011260">
    <property type="entry name" value="RNAP_asu_C"/>
</dbReference>
<dbReference type="InterPro" id="IPR036643">
    <property type="entry name" value="RNApol_insert_sf"/>
</dbReference>
<dbReference type="NCBIfam" id="NF003513">
    <property type="entry name" value="PRK05182.1-2"/>
    <property type="match status" value="1"/>
</dbReference>
<dbReference type="NCBIfam" id="NF003519">
    <property type="entry name" value="PRK05182.2-5"/>
    <property type="match status" value="1"/>
</dbReference>
<dbReference type="NCBIfam" id="TIGR02027">
    <property type="entry name" value="rpoA"/>
    <property type="match status" value="1"/>
</dbReference>
<dbReference type="Pfam" id="PF01000">
    <property type="entry name" value="RNA_pol_A_bac"/>
    <property type="match status" value="1"/>
</dbReference>
<dbReference type="Pfam" id="PF03118">
    <property type="entry name" value="RNA_pol_A_CTD"/>
    <property type="match status" value="1"/>
</dbReference>
<dbReference type="Pfam" id="PF01193">
    <property type="entry name" value="RNA_pol_L"/>
    <property type="match status" value="1"/>
</dbReference>
<dbReference type="SMART" id="SM00662">
    <property type="entry name" value="RPOLD"/>
    <property type="match status" value="1"/>
</dbReference>
<dbReference type="SUPFAM" id="SSF47789">
    <property type="entry name" value="C-terminal domain of RNA polymerase alpha subunit"/>
    <property type="match status" value="1"/>
</dbReference>
<dbReference type="SUPFAM" id="SSF56553">
    <property type="entry name" value="Insert subdomain of RNA polymerase alpha subunit"/>
    <property type="match status" value="1"/>
</dbReference>
<dbReference type="SUPFAM" id="SSF55257">
    <property type="entry name" value="RBP11-like subunits of RNA polymerase"/>
    <property type="match status" value="1"/>
</dbReference>
<evidence type="ECO:0000255" key="1">
    <source>
        <dbReference type="HAMAP-Rule" id="MF_00059"/>
    </source>
</evidence>
<proteinExistence type="inferred from homology"/>
<organism>
    <name type="scientific">Pasteurella multocida (strain Pm70)</name>
    <dbReference type="NCBI Taxonomy" id="272843"/>
    <lineage>
        <taxon>Bacteria</taxon>
        <taxon>Pseudomonadati</taxon>
        <taxon>Pseudomonadota</taxon>
        <taxon>Gammaproteobacteria</taxon>
        <taxon>Pasteurellales</taxon>
        <taxon>Pasteurellaceae</taxon>
        <taxon>Pasteurella</taxon>
    </lineage>
</organism>
<feature type="chain" id="PRO_0000175351" description="DNA-directed RNA polymerase subunit alpha">
    <location>
        <begin position="1"/>
        <end position="329"/>
    </location>
</feature>
<feature type="region of interest" description="Alpha N-terminal domain (alpha-NTD)" evidence="1">
    <location>
        <begin position="1"/>
        <end position="235"/>
    </location>
</feature>
<feature type="region of interest" description="Alpha C-terminal domain (alpha-CTD)" evidence="1">
    <location>
        <begin position="249"/>
        <end position="329"/>
    </location>
</feature>
<sequence>MQGSVTEFLKPRLVDIEQISSTHAKVILEPLERGFGHTLGNALRRILLSSMPGCAVTEVEIDGVLHEYSSKEGVQEDILEVLLNLKGLAVKVQNKDDVFLTLNKSGIGPVVAADITHDGDVEIVNPEHVICHLTDESASINMRIRVQRGRGYVPASARVHAQDEERPIGRLLVDACYSPVDRIAYNVEAARVEQRTDLDKLVIELETNGTIDPEEAIRRAATILAEQLDAFVDLRDVRQPEVKEEKPEFDPILLRPVDDLELTVRSANCLKAETIHYIGDLVQRTEVELLKTPNLGKKSLTEIKDVLASRGLSLGMRLENWPPASIAED</sequence>
<gene>
    <name evidence="1" type="primary">rpoA</name>
    <name type="ordered locus">PM1390</name>
</gene>
<protein>
    <recommendedName>
        <fullName evidence="1">DNA-directed RNA polymerase subunit alpha</fullName>
        <shortName evidence="1">RNAP subunit alpha</shortName>
        <ecNumber evidence="1">2.7.7.6</ecNumber>
    </recommendedName>
    <alternativeName>
        <fullName evidence="1">RNA polymerase subunit alpha</fullName>
    </alternativeName>
    <alternativeName>
        <fullName evidence="1">Transcriptase subunit alpha</fullName>
    </alternativeName>
</protein>
<comment type="function">
    <text evidence="1">DNA-dependent RNA polymerase catalyzes the transcription of DNA into RNA using the four ribonucleoside triphosphates as substrates.</text>
</comment>
<comment type="catalytic activity">
    <reaction evidence="1">
        <text>RNA(n) + a ribonucleoside 5'-triphosphate = RNA(n+1) + diphosphate</text>
        <dbReference type="Rhea" id="RHEA:21248"/>
        <dbReference type="Rhea" id="RHEA-COMP:14527"/>
        <dbReference type="Rhea" id="RHEA-COMP:17342"/>
        <dbReference type="ChEBI" id="CHEBI:33019"/>
        <dbReference type="ChEBI" id="CHEBI:61557"/>
        <dbReference type="ChEBI" id="CHEBI:140395"/>
        <dbReference type="EC" id="2.7.7.6"/>
    </reaction>
</comment>
<comment type="subunit">
    <text evidence="1">Homodimer. The RNAP catalytic core consists of 2 alpha, 1 beta, 1 beta' and 1 omega subunit. When a sigma factor is associated with the core the holoenzyme is formed, which can initiate transcription.</text>
</comment>
<comment type="domain">
    <text evidence="1">The N-terminal domain is essential for RNAP assembly and basal transcription, whereas the C-terminal domain is involved in interaction with transcriptional regulators and with upstream promoter elements.</text>
</comment>
<comment type="similarity">
    <text evidence="1">Belongs to the RNA polymerase alpha chain family.</text>
</comment>